<accession>P0DL28</accession>
<protein>
    <recommendedName>
        <fullName>F-box/WD repeat-containing protein 8</fullName>
    </recommendedName>
    <alternativeName>
        <fullName>F-box and WD-40 domain-containing protein 8</fullName>
    </alternativeName>
</protein>
<dbReference type="EMBL" id="AABR06072298">
    <property type="status" value="NOT_ANNOTATED_CDS"/>
    <property type="molecule type" value="Genomic_DNA"/>
</dbReference>
<dbReference type="SMR" id="P0DL28"/>
<dbReference type="CORUM" id="P0DL28"/>
<dbReference type="FunCoup" id="P0DL28">
    <property type="interactions" value="2753"/>
</dbReference>
<dbReference type="IntAct" id="P0DL28">
    <property type="interactions" value="2"/>
</dbReference>
<dbReference type="STRING" id="10116.ENSRNOP00000069282"/>
<dbReference type="PhosphoSitePlus" id="P0DL28"/>
<dbReference type="PaxDb" id="10116-ENSRNOP00000059618"/>
<dbReference type="AGR" id="RGD:1306032"/>
<dbReference type="RGD" id="1306032">
    <property type="gene designation" value="Fbxw8"/>
</dbReference>
<dbReference type="VEuPathDB" id="HostDB:ENSRNOG00000001126"/>
<dbReference type="eggNOG" id="KOG0274">
    <property type="taxonomic scope" value="Eukaryota"/>
</dbReference>
<dbReference type="InParanoid" id="P0DL28"/>
<dbReference type="PhylomeDB" id="P0DL28"/>
<dbReference type="Reactome" id="R-RNO-8951664">
    <property type="pathway name" value="Neddylation"/>
</dbReference>
<dbReference type="Reactome" id="R-RNO-983168">
    <property type="pathway name" value="Antigen processing: Ubiquitination &amp; Proteasome degradation"/>
</dbReference>
<dbReference type="UniPathway" id="UPA00143"/>
<dbReference type="PRO" id="PR:P0DL28"/>
<dbReference type="Proteomes" id="UP000002494">
    <property type="component" value="Chromosome 12"/>
</dbReference>
<dbReference type="Bgee" id="ENSRNOG00000001126">
    <property type="expression patterns" value="Expressed in skeletal muscle tissue and 19 other cell types or tissues"/>
</dbReference>
<dbReference type="ExpressionAtlas" id="P0DL28">
    <property type="expression patterns" value="baseline and differential"/>
</dbReference>
<dbReference type="GO" id="GO:1990393">
    <property type="term" value="C:3M complex"/>
    <property type="evidence" value="ECO:0000266"/>
    <property type="project" value="RGD"/>
</dbReference>
<dbReference type="GO" id="GO:0005814">
    <property type="term" value="C:centriole"/>
    <property type="evidence" value="ECO:0000318"/>
    <property type="project" value="GO_Central"/>
</dbReference>
<dbReference type="GO" id="GO:0036064">
    <property type="term" value="C:ciliary basal body"/>
    <property type="evidence" value="ECO:0000318"/>
    <property type="project" value="GO_Central"/>
</dbReference>
<dbReference type="GO" id="GO:0031467">
    <property type="term" value="C:Cul7-RING ubiquitin ligase complex"/>
    <property type="evidence" value="ECO:0000250"/>
    <property type="project" value="UniProtKB"/>
</dbReference>
<dbReference type="GO" id="GO:0005737">
    <property type="term" value="C:cytoplasm"/>
    <property type="evidence" value="ECO:0000250"/>
    <property type="project" value="UniProtKB"/>
</dbReference>
<dbReference type="GO" id="GO:0005829">
    <property type="term" value="C:cytosol"/>
    <property type="evidence" value="ECO:0000266"/>
    <property type="project" value="RGD"/>
</dbReference>
<dbReference type="GO" id="GO:0005794">
    <property type="term" value="C:Golgi apparatus"/>
    <property type="evidence" value="ECO:0000314"/>
    <property type="project" value="UniProtKB"/>
</dbReference>
<dbReference type="GO" id="GO:0048471">
    <property type="term" value="C:perinuclear region of cytoplasm"/>
    <property type="evidence" value="ECO:0000314"/>
    <property type="project" value="UniProtKB"/>
</dbReference>
<dbReference type="GO" id="GO:0019005">
    <property type="term" value="C:SCF ubiquitin ligase complex"/>
    <property type="evidence" value="ECO:0000266"/>
    <property type="project" value="RGD"/>
</dbReference>
<dbReference type="GO" id="GO:1990756">
    <property type="term" value="F:ubiquitin-like ligase-substrate adaptor activity"/>
    <property type="evidence" value="ECO:0000266"/>
    <property type="project" value="RGD"/>
</dbReference>
<dbReference type="GO" id="GO:0008283">
    <property type="term" value="P:cell population proliferation"/>
    <property type="evidence" value="ECO:0000250"/>
    <property type="project" value="UniProtKB"/>
</dbReference>
<dbReference type="GO" id="GO:0060271">
    <property type="term" value="P:cilium assembly"/>
    <property type="evidence" value="ECO:0000318"/>
    <property type="project" value="GO_Central"/>
</dbReference>
<dbReference type="GO" id="GO:0007030">
    <property type="term" value="P:Golgi organization"/>
    <property type="evidence" value="ECO:0000315"/>
    <property type="project" value="UniProtKB"/>
</dbReference>
<dbReference type="GO" id="GO:0060716">
    <property type="term" value="P:labyrinthine layer blood vessel development"/>
    <property type="evidence" value="ECO:0000266"/>
    <property type="project" value="RGD"/>
</dbReference>
<dbReference type="GO" id="GO:0046627">
    <property type="term" value="P:negative regulation of insulin receptor signaling pathway"/>
    <property type="evidence" value="ECO:0000266"/>
    <property type="project" value="RGD"/>
</dbReference>
<dbReference type="GO" id="GO:0050775">
    <property type="term" value="P:positive regulation of dendrite morphogenesis"/>
    <property type="evidence" value="ECO:0000315"/>
    <property type="project" value="UniProtKB"/>
</dbReference>
<dbReference type="GO" id="GO:0032436">
    <property type="term" value="P:positive regulation of proteasomal ubiquitin-dependent protein catabolic process"/>
    <property type="evidence" value="ECO:0000266"/>
    <property type="project" value="RGD"/>
</dbReference>
<dbReference type="GO" id="GO:0043161">
    <property type="term" value="P:proteasome-mediated ubiquitin-dependent protein catabolic process"/>
    <property type="evidence" value="ECO:0000250"/>
    <property type="project" value="UniProtKB"/>
</dbReference>
<dbReference type="GO" id="GO:0016567">
    <property type="term" value="P:protein ubiquitination"/>
    <property type="evidence" value="ECO:0000250"/>
    <property type="project" value="UniProtKB"/>
</dbReference>
<dbReference type="GO" id="GO:0060712">
    <property type="term" value="P:spongiotrophoblast layer development"/>
    <property type="evidence" value="ECO:0000266"/>
    <property type="project" value="RGD"/>
</dbReference>
<dbReference type="GO" id="GO:0006511">
    <property type="term" value="P:ubiquitin-dependent protein catabolic process"/>
    <property type="evidence" value="ECO:0000266"/>
    <property type="project" value="RGD"/>
</dbReference>
<dbReference type="CDD" id="cd22134">
    <property type="entry name" value="F-box_FBXW8"/>
    <property type="match status" value="1"/>
</dbReference>
<dbReference type="FunFam" id="1.20.1280.50:FF:000025">
    <property type="entry name" value="F-box and WD repeat domain containing 8"/>
    <property type="match status" value="1"/>
</dbReference>
<dbReference type="FunFam" id="2.130.10.10:FF:000308">
    <property type="entry name" value="F-box and WD repeat domain containing 8"/>
    <property type="match status" value="1"/>
</dbReference>
<dbReference type="FunFam" id="2.130.10.10:FF:000428">
    <property type="entry name" value="F-box and WD repeat domain containing 8"/>
    <property type="match status" value="1"/>
</dbReference>
<dbReference type="Gene3D" id="1.20.1280.50">
    <property type="match status" value="1"/>
</dbReference>
<dbReference type="Gene3D" id="2.130.10.10">
    <property type="entry name" value="YVTN repeat-like/Quinoprotein amine dehydrogenase"/>
    <property type="match status" value="2"/>
</dbReference>
<dbReference type="InterPro" id="IPR036047">
    <property type="entry name" value="F-box-like_dom_sf"/>
</dbReference>
<dbReference type="InterPro" id="IPR001810">
    <property type="entry name" value="F-box_dom"/>
</dbReference>
<dbReference type="InterPro" id="IPR015943">
    <property type="entry name" value="WD40/YVTN_repeat-like_dom_sf"/>
</dbReference>
<dbReference type="InterPro" id="IPR036322">
    <property type="entry name" value="WD40_repeat_dom_sf"/>
</dbReference>
<dbReference type="InterPro" id="IPR001680">
    <property type="entry name" value="WD40_rpt"/>
</dbReference>
<dbReference type="InterPro" id="IPR050505">
    <property type="entry name" value="WDR55_POC1"/>
</dbReference>
<dbReference type="PANTHER" id="PTHR44019:SF8">
    <property type="entry name" value="POC1 CENTRIOLAR PROTEIN HOMOLOG"/>
    <property type="match status" value="1"/>
</dbReference>
<dbReference type="PANTHER" id="PTHR44019">
    <property type="entry name" value="WD REPEAT-CONTAINING PROTEIN 55"/>
    <property type="match status" value="1"/>
</dbReference>
<dbReference type="Pfam" id="PF12937">
    <property type="entry name" value="F-box-like"/>
    <property type="match status" value="1"/>
</dbReference>
<dbReference type="SMART" id="SM00256">
    <property type="entry name" value="FBOX"/>
    <property type="match status" value="1"/>
</dbReference>
<dbReference type="SMART" id="SM00320">
    <property type="entry name" value="WD40"/>
    <property type="match status" value="5"/>
</dbReference>
<dbReference type="SUPFAM" id="SSF81383">
    <property type="entry name" value="F-box domain"/>
    <property type="match status" value="1"/>
</dbReference>
<dbReference type="SUPFAM" id="SSF50978">
    <property type="entry name" value="WD40 repeat-like"/>
    <property type="match status" value="1"/>
</dbReference>
<dbReference type="PROSITE" id="PS50181">
    <property type="entry name" value="FBOX"/>
    <property type="match status" value="1"/>
</dbReference>
<dbReference type="PROSITE" id="PS00678">
    <property type="entry name" value="WD_REPEATS_1"/>
    <property type="match status" value="1"/>
</dbReference>
<dbReference type="PROSITE" id="PS50082">
    <property type="entry name" value="WD_REPEATS_2"/>
    <property type="match status" value="1"/>
</dbReference>
<dbReference type="PROSITE" id="PS50294">
    <property type="entry name" value="WD_REPEATS_REGION"/>
    <property type="match status" value="2"/>
</dbReference>
<keyword id="KW-0007">Acetylation</keyword>
<keyword id="KW-0963">Cytoplasm</keyword>
<keyword id="KW-0333">Golgi apparatus</keyword>
<keyword id="KW-0597">Phosphoprotein</keyword>
<keyword id="KW-1185">Reference proteome</keyword>
<keyword id="KW-0677">Repeat</keyword>
<keyword id="KW-0853">WD repeat</keyword>
<proteinExistence type="evidence at protein level"/>
<comment type="function">
    <text evidence="1 2 5">Substrate-recognition component of the Cul7-RING(FBXW8) ubiquitin ligase complex, which mediates the ubiquitination and subsequent proteasomal degradation of target proteins (By similarity). The Cul7-RING(FBXW8) complex mediates ubiquitination and consequent degradation of GORASP1, acting as a component of the ubiquitin ligase pathway that regulates Golgi morphogenesis and dendrite patterning in brain (PubMed:21572988). Mediates ubiquitination and degradation of IRS1 in a mTOR-dependent manner: the Cul7-RING(FBXW8) complex recognizes and binds IRS1 previously phosphorylated by S6 kinase (RPS6KB1 or RPS6KB2) (By similarity). The Cul7-RING(FBXW8) complex also mediates ubiquitination of MAP4K1/HPK1: recognizes and binds autophosphorylated MAP4K1/HPK1, leading to its degradation, thereby affecting cell proliferation and differentiation (By similarity). The Cul7-RING(FBXW8) complex also mediates ubiquitination of phosphorylated cyclin-D1 (CCND1) (By similarity). The Cul7-RING(FBXW8) complex is however not a major regulator of CCND1 stability during the G1/S transition (By similarity). Associated component of the 3M complex, suggesting that it mediates some of 3M complex functions (By similarity).</text>
</comment>
<comment type="pathway">
    <text>Protein modification; protein ubiquitination.</text>
</comment>
<comment type="subunit">
    <text evidence="1 2">Component of the Cul7-RING(FBXW8) complex consisting of CUL7, RBX1, SKP1 and FBXW8; within the complex interacts with CUL7 and SKP1 (By similarity). Interacts with GLMN isoform 1 (By similarity). Interacts with OBSL1, CUL1, CUL2, CCT6B, PFDN5, CCT2, CCT3, CCT6A, CCT7, VBP1, CCDC8, ARF1, TRIP13, PDCD5 and GORASP1 (By similarity). Interacts with MAP4K1/HPK1 (when autophosphorylated) (By similarity). Associated component of the 3M complex (By similarity). Interacts with POUF51 (when phosphorylated on 'Ser-347') (By similarity).</text>
</comment>
<comment type="subcellular location">
    <subcellularLocation>
        <location evidence="5">Cytoplasm</location>
        <location evidence="5">Perinuclear region</location>
    </subcellularLocation>
    <subcellularLocation>
        <location evidence="5">Golgi apparatus</location>
    </subcellularLocation>
    <subcellularLocation>
        <location evidence="1">Cytoplasm</location>
        <location evidence="1">Cytosol</location>
    </subcellularLocation>
    <text evidence="1 5">Colocalizes with CUL7 at the Golgi apparatus in neurons (PubMed:21572988). Localizes to the cytosol when phosphorylated at Ser-84, promoting IRS1 ubiquitination (By similarity).</text>
</comment>
<comment type="tissue specificity">
    <text evidence="5">Expressed in placenta and embryonic brain (at protein level).</text>
</comment>
<comment type="developmental stage">
    <text evidence="5">In cerebellum, abundantly expressed during the first two postnatal weeks, with levels decreasing thereafter. In primary granule neurons, highly expressed at postnatal day 6 (P6), with levels decreasing with neuron maturation (at protein level).</text>
</comment>
<comment type="PTM">
    <text evidence="1">Phosphorylation at Ser-84 by mTORC2 promotes FBXW8 stabilization, allowing its translocation to the cytosol in response to insulin.</text>
</comment>
<evidence type="ECO:0000250" key="1">
    <source>
        <dbReference type="UniProtKB" id="Q8BIA4"/>
    </source>
</evidence>
<evidence type="ECO:0000250" key="2">
    <source>
        <dbReference type="UniProtKB" id="Q8N3Y1"/>
    </source>
</evidence>
<evidence type="ECO:0000255" key="3">
    <source>
        <dbReference type="PROSITE-ProRule" id="PRU00080"/>
    </source>
</evidence>
<evidence type="ECO:0000256" key="4">
    <source>
        <dbReference type="SAM" id="MobiDB-lite"/>
    </source>
</evidence>
<evidence type="ECO:0000269" key="5">
    <source>
    </source>
</evidence>
<sequence>MEDHNLEEFRQRWQEELAHSQVLRRRRRLEAGERRPRRPEAGARGEPASGYLGLAQGLLEGAGRPPAPRPGRTDRKDVSSRSRSPPDRDAAEPEPLVDQLIRDLNEMDDVPFFDVHLPYELAINIFQYLNRRELGLCAQVSKTWKVIAEDEVLWYRLCRQEGHLPHSRFSDYTCWKLILQECLAPVHLIRPSWMNRKGAVSELEHVPDAVLCDVRSHDGVVIAGYTSGEVRVWDTRTWDYVAPFLESESEEEDPGMQPYVSFVRINSSLAVAAYEDGILNVWDLRTGRFPIFRFEHDARIQALALSQEKPVVATASAFDVVMLYPNEEGNWHVASEFEVQKLVDYLEIVPNTGRYPVAIATAGDLVYLLKAEDSARTLHYVYGQPATCLDVSASQVAFGVKSLGWVYEGNKILVYSLEAERCLSKLGNALGDFTCVNIRDSPPNLMVSGNMDRRVRLHDLRTDKIALSLSAHQLGVSAVQMDDWKIVSGGEEGLVSVWDYRMNQKLWEVHSRHPVRYISFNSHSLITANVPYEKVLRNSDLDNFACHRRHRGLIHAYEFAVDQLAFQSPLPICRLPRDTVAGYSYDLALSFPYDSI</sequence>
<reference key="1">
    <citation type="journal article" date="2004" name="Nature">
        <title>Genome sequence of the Brown Norway rat yields insights into mammalian evolution.</title>
        <authorList>
            <person name="Gibbs R.A."/>
            <person name="Weinstock G.M."/>
            <person name="Metzker M.L."/>
            <person name="Muzny D.M."/>
            <person name="Sodergren E.J."/>
            <person name="Scherer S."/>
            <person name="Scott G."/>
            <person name="Steffen D."/>
            <person name="Worley K.C."/>
            <person name="Burch P.E."/>
            <person name="Okwuonu G."/>
            <person name="Hines S."/>
            <person name="Lewis L."/>
            <person name="Deramo C."/>
            <person name="Delgado O."/>
            <person name="Dugan-Rocha S."/>
            <person name="Miner G."/>
            <person name="Morgan M."/>
            <person name="Hawes A."/>
            <person name="Gill R."/>
            <person name="Holt R.A."/>
            <person name="Adams M.D."/>
            <person name="Amanatides P.G."/>
            <person name="Baden-Tillson H."/>
            <person name="Barnstead M."/>
            <person name="Chin S."/>
            <person name="Evans C.A."/>
            <person name="Ferriera S."/>
            <person name="Fosler C."/>
            <person name="Glodek A."/>
            <person name="Gu Z."/>
            <person name="Jennings D."/>
            <person name="Kraft C.L."/>
            <person name="Nguyen T."/>
            <person name="Pfannkoch C.M."/>
            <person name="Sitter C."/>
            <person name="Sutton G.G."/>
            <person name="Venter J.C."/>
            <person name="Woodage T."/>
            <person name="Smith D."/>
            <person name="Lee H.-M."/>
            <person name="Gustafson E."/>
            <person name="Cahill P."/>
            <person name="Kana A."/>
            <person name="Doucette-Stamm L."/>
            <person name="Weinstock K."/>
            <person name="Fechtel K."/>
            <person name="Weiss R.B."/>
            <person name="Dunn D.M."/>
            <person name="Green E.D."/>
            <person name="Blakesley R.W."/>
            <person name="Bouffard G.G."/>
            <person name="De Jong P.J."/>
            <person name="Osoegawa K."/>
            <person name="Zhu B."/>
            <person name="Marra M."/>
            <person name="Schein J."/>
            <person name="Bosdet I."/>
            <person name="Fjell C."/>
            <person name="Jones S."/>
            <person name="Krzywinski M."/>
            <person name="Mathewson C."/>
            <person name="Siddiqui A."/>
            <person name="Wye N."/>
            <person name="McPherson J."/>
            <person name="Zhao S."/>
            <person name="Fraser C.M."/>
            <person name="Shetty J."/>
            <person name="Shatsman S."/>
            <person name="Geer K."/>
            <person name="Chen Y."/>
            <person name="Abramzon S."/>
            <person name="Nierman W.C."/>
            <person name="Havlak P.H."/>
            <person name="Chen R."/>
            <person name="Durbin K.J."/>
            <person name="Egan A."/>
            <person name="Ren Y."/>
            <person name="Song X.-Z."/>
            <person name="Li B."/>
            <person name="Liu Y."/>
            <person name="Qin X."/>
            <person name="Cawley S."/>
            <person name="Cooney A.J."/>
            <person name="D'Souza L.M."/>
            <person name="Martin K."/>
            <person name="Wu J.Q."/>
            <person name="Gonzalez-Garay M.L."/>
            <person name="Jackson A.R."/>
            <person name="Kalafus K.J."/>
            <person name="McLeod M.P."/>
            <person name="Milosavljevic A."/>
            <person name="Virk D."/>
            <person name="Volkov A."/>
            <person name="Wheeler D.A."/>
            <person name="Zhang Z."/>
            <person name="Bailey J.A."/>
            <person name="Eichler E.E."/>
            <person name="Tuzun E."/>
            <person name="Birney E."/>
            <person name="Mongin E."/>
            <person name="Ureta-Vidal A."/>
            <person name="Woodwark C."/>
            <person name="Zdobnov E."/>
            <person name="Bork P."/>
            <person name="Suyama M."/>
            <person name="Torrents D."/>
            <person name="Alexandersson M."/>
            <person name="Trask B.J."/>
            <person name="Young J.M."/>
            <person name="Huang H."/>
            <person name="Wang H."/>
            <person name="Xing H."/>
            <person name="Daniels S."/>
            <person name="Gietzen D."/>
            <person name="Schmidt J."/>
            <person name="Stevens K."/>
            <person name="Vitt U."/>
            <person name="Wingrove J."/>
            <person name="Camara F."/>
            <person name="Mar Alba M."/>
            <person name="Abril J.F."/>
            <person name="Guigo R."/>
            <person name="Smit A."/>
            <person name="Dubchak I."/>
            <person name="Rubin E.M."/>
            <person name="Couronne O."/>
            <person name="Poliakov A."/>
            <person name="Huebner N."/>
            <person name="Ganten D."/>
            <person name="Goesele C."/>
            <person name="Hummel O."/>
            <person name="Kreitler T."/>
            <person name="Lee Y.-A."/>
            <person name="Monti J."/>
            <person name="Schulz H."/>
            <person name="Zimdahl H."/>
            <person name="Himmelbauer H."/>
            <person name="Lehrach H."/>
            <person name="Jacob H.J."/>
            <person name="Bromberg S."/>
            <person name="Gullings-Handley J."/>
            <person name="Jensen-Seaman M.I."/>
            <person name="Kwitek A.E."/>
            <person name="Lazar J."/>
            <person name="Pasko D."/>
            <person name="Tonellato P.J."/>
            <person name="Twigger S."/>
            <person name="Ponting C.P."/>
            <person name="Duarte J.M."/>
            <person name="Rice S."/>
            <person name="Goodstadt L."/>
            <person name="Beatson S.A."/>
            <person name="Emes R.D."/>
            <person name="Winter E.E."/>
            <person name="Webber C."/>
            <person name="Brandt P."/>
            <person name="Nyakatura G."/>
            <person name="Adetobi M."/>
            <person name="Chiaromonte F."/>
            <person name="Elnitski L."/>
            <person name="Eswara P."/>
            <person name="Hardison R.C."/>
            <person name="Hou M."/>
            <person name="Kolbe D."/>
            <person name="Makova K."/>
            <person name="Miller W."/>
            <person name="Nekrutenko A."/>
            <person name="Riemer C."/>
            <person name="Schwartz S."/>
            <person name="Taylor J."/>
            <person name="Yang S."/>
            <person name="Zhang Y."/>
            <person name="Lindpaintner K."/>
            <person name="Andrews T.D."/>
            <person name="Caccamo M."/>
            <person name="Clamp M."/>
            <person name="Clarke L."/>
            <person name="Curwen V."/>
            <person name="Durbin R.M."/>
            <person name="Eyras E."/>
            <person name="Searle S.M."/>
            <person name="Cooper G.M."/>
            <person name="Batzoglou S."/>
            <person name="Brudno M."/>
            <person name="Sidow A."/>
            <person name="Stone E.A."/>
            <person name="Payseur B.A."/>
            <person name="Bourque G."/>
            <person name="Lopez-Otin C."/>
            <person name="Puente X.S."/>
            <person name="Chakrabarti K."/>
            <person name="Chatterji S."/>
            <person name="Dewey C."/>
            <person name="Pachter L."/>
            <person name="Bray N."/>
            <person name="Yap V.B."/>
            <person name="Caspi A."/>
            <person name="Tesler G."/>
            <person name="Pevzner P.A."/>
            <person name="Haussler D."/>
            <person name="Roskin K.M."/>
            <person name="Baertsch R."/>
            <person name="Clawson H."/>
            <person name="Furey T.S."/>
            <person name="Hinrichs A.S."/>
            <person name="Karolchik D."/>
            <person name="Kent W.J."/>
            <person name="Rosenbloom K.R."/>
            <person name="Trumbower H."/>
            <person name="Weirauch M."/>
            <person name="Cooper D.N."/>
            <person name="Stenson P.D."/>
            <person name="Ma B."/>
            <person name="Brent M."/>
            <person name="Arumugam M."/>
            <person name="Shteynberg D."/>
            <person name="Copley R.R."/>
            <person name="Taylor M.S."/>
            <person name="Riethman H."/>
            <person name="Mudunuri U."/>
            <person name="Peterson J."/>
            <person name="Guyer M."/>
            <person name="Felsenfeld A."/>
            <person name="Old S."/>
            <person name="Mockrin S."/>
            <person name="Collins F.S."/>
        </authorList>
    </citation>
    <scope>NUCLEOTIDE SEQUENCE [LARGE SCALE GENOMIC DNA]</scope>
    <source>
        <strain>Brown Norway</strain>
    </source>
</reference>
<reference key="2">
    <citation type="journal article" date="2011" name="PLoS Biol.">
        <title>An OBSL1-Cul7Fbxw8 ubiquitin ligase signaling mechanism regulates Golgi morphology and dendrite patterning.</title>
        <authorList>
            <person name="Litterman N."/>
            <person name="Ikeuchi Y."/>
            <person name="Gallardo G."/>
            <person name="O'Connell B.C."/>
            <person name="Sowa M.E."/>
            <person name="Gygi S.P."/>
            <person name="Harper J.W."/>
            <person name="Bonni A."/>
        </authorList>
    </citation>
    <scope>FUNCTION</scope>
    <scope>SUBCELLULAR LOCATION</scope>
    <scope>TISSUE SPECIFICITY</scope>
    <scope>DEVELOPMENTAL STAGE</scope>
</reference>
<gene>
    <name type="primary">Fbxw8</name>
</gene>
<name>FBXW8_RAT</name>
<organism>
    <name type="scientific">Rattus norvegicus</name>
    <name type="common">Rat</name>
    <dbReference type="NCBI Taxonomy" id="10116"/>
    <lineage>
        <taxon>Eukaryota</taxon>
        <taxon>Metazoa</taxon>
        <taxon>Chordata</taxon>
        <taxon>Craniata</taxon>
        <taxon>Vertebrata</taxon>
        <taxon>Euteleostomi</taxon>
        <taxon>Mammalia</taxon>
        <taxon>Eutheria</taxon>
        <taxon>Euarchontoglires</taxon>
        <taxon>Glires</taxon>
        <taxon>Rodentia</taxon>
        <taxon>Myomorpha</taxon>
        <taxon>Muroidea</taxon>
        <taxon>Muridae</taxon>
        <taxon>Murinae</taxon>
        <taxon>Rattus</taxon>
    </lineage>
</organism>
<feature type="chain" id="PRO_0000422124" description="F-box/WD repeat-containing protein 8">
    <location>
        <begin position="1"/>
        <end position="596"/>
    </location>
</feature>
<feature type="domain" description="F-box" evidence="3">
    <location>
        <begin position="111"/>
        <end position="157"/>
    </location>
</feature>
<feature type="repeat" description="WD 1" evidence="2">
    <location>
        <begin position="199"/>
        <end position="248"/>
    </location>
</feature>
<feature type="repeat" description="WD 2" evidence="2">
    <location>
        <begin position="257"/>
        <end position="297"/>
    </location>
</feature>
<feature type="repeat" description="WD 3" evidence="2">
    <location>
        <begin position="298"/>
        <end position="338"/>
    </location>
</feature>
<feature type="repeat" description="WD 4" evidence="2">
    <location>
        <begin position="339"/>
        <end position="381"/>
    </location>
</feature>
<feature type="repeat" description="WD 5" evidence="2">
    <location>
        <begin position="382"/>
        <end position="427"/>
    </location>
</feature>
<feature type="repeat" description="WD 6" evidence="2">
    <location>
        <begin position="428"/>
        <end position="473"/>
    </location>
</feature>
<feature type="repeat" description="WD 7" evidence="2">
    <location>
        <begin position="474"/>
        <end position="511"/>
    </location>
</feature>
<feature type="repeat" description="WD 8" evidence="2">
    <location>
        <begin position="512"/>
        <end position="559"/>
    </location>
</feature>
<feature type="region of interest" description="Disordered" evidence="4">
    <location>
        <begin position="21"/>
        <end position="95"/>
    </location>
</feature>
<feature type="compositionally biased region" description="Basic and acidic residues" evidence="4">
    <location>
        <begin position="29"/>
        <end position="43"/>
    </location>
</feature>
<feature type="compositionally biased region" description="Low complexity" evidence="4">
    <location>
        <begin position="44"/>
        <end position="64"/>
    </location>
</feature>
<feature type="compositionally biased region" description="Basic and acidic residues" evidence="4">
    <location>
        <begin position="71"/>
        <end position="91"/>
    </location>
</feature>
<feature type="modified residue" description="N-acetylmethionine" evidence="2">
    <location>
        <position position="1"/>
    </location>
</feature>
<feature type="modified residue" description="Phosphoserine" evidence="1">
    <location>
        <position position="82"/>
    </location>
</feature>
<feature type="modified residue" description="Phosphoserine" evidence="1">
    <location>
        <position position="84"/>
    </location>
</feature>